<organism>
    <name type="scientific">Xylella fastidiosa (strain M23)</name>
    <dbReference type="NCBI Taxonomy" id="405441"/>
    <lineage>
        <taxon>Bacteria</taxon>
        <taxon>Pseudomonadati</taxon>
        <taxon>Pseudomonadota</taxon>
        <taxon>Gammaproteobacteria</taxon>
        <taxon>Lysobacterales</taxon>
        <taxon>Lysobacteraceae</taxon>
        <taxon>Xylella</taxon>
    </lineage>
</organism>
<gene>
    <name evidence="1" type="primary">metE</name>
    <name type="ordered locus">XfasM23_1392</name>
</gene>
<sequence length="758" mass="85748">MTIVTNLGFPRIGARRELKRALESHWRGETDATQLQHTARELRARHWRLQRDAGVDLPPSNDFSLYDHVLDTAFLFDAIPQRYRGLVDADPLAGYFAMARGRQADNIDLHALEMTKWFDTNYHYLVPELHRDQHFALRGNKPIAEFEEALALGITTRPVLLGPVSFLLLSKTVDGSNRLDLLERLLPVYTQLLRQLQESGAEWVQIDEPTLVLDLDAQTQQAFRKAYAILNQGPRPKLLLTSYFGPLGDNLELALQLPADGLHIDLVRGTEQLDAVLNTLPAGRVLSAGLVNGRNIWRTDLDNALTMARYAQGHVGADRLWLAPSCSLLHVPVDLEQEKNLDADVRNWLAFAKQKLSELRVLADALDNKPEAETALTQTRQALEARRQSPKVHRPDVAQRLAALTPDTTRRNTAYPQRSQAQQHTLNLPAYPTTTIGSFPQTLEVREARAQFKSGKLSESDYEAFLKAETERCVRTQEEIGLDVLVHGEFERNDMVEYFGEQLDGFIFTKLGWVQSYGSRCVKPPIIYGDVVRPAPMTVTWSAYAQSLTDKPMKGMLTGPVTMLQWSFVRDDQERAQTCRQIALALRDEVQDLEKAGIKVIQIDEPAIREGLPLRRGEWADYLNWAVESFRIASSNVHDTTQIHTHMCYSEFNDIIEAVAALDADVISIETSRSRMELLDAFVKFRYPNAIGPGVYDIHSPRVPQEEEMVLLLKKARAVLPPEQLWVNPDCGLKTRGWKETRAALQTMVHAAQRLRAE</sequence>
<reference key="1">
    <citation type="journal article" date="2010" name="J. Bacteriol.">
        <title>Whole genome sequences of two Xylella fastidiosa strains (M12 and M23) causing almond leaf scorch disease in California.</title>
        <authorList>
            <person name="Chen J."/>
            <person name="Xie G."/>
            <person name="Han S."/>
            <person name="Chertkov O."/>
            <person name="Sims D."/>
            <person name="Civerolo E.L."/>
        </authorList>
    </citation>
    <scope>NUCLEOTIDE SEQUENCE [LARGE SCALE GENOMIC DNA]</scope>
    <source>
        <strain>M23</strain>
    </source>
</reference>
<feature type="chain" id="PRO_1000097852" description="5-methyltetrahydropteroyltriglutamate--homocysteine methyltransferase">
    <location>
        <begin position="1"/>
        <end position="758"/>
    </location>
</feature>
<feature type="active site" description="Proton donor" evidence="1">
    <location>
        <position position="699"/>
    </location>
</feature>
<feature type="binding site" evidence="1">
    <location>
        <begin position="16"/>
        <end position="19"/>
    </location>
    <ligand>
        <name>5-methyltetrahydropteroyltri-L-glutamate</name>
        <dbReference type="ChEBI" id="CHEBI:58207"/>
    </ligand>
</feature>
<feature type="binding site" evidence="1">
    <location>
        <position position="116"/>
    </location>
    <ligand>
        <name>5-methyltetrahydropteroyltri-L-glutamate</name>
        <dbReference type="ChEBI" id="CHEBI:58207"/>
    </ligand>
</feature>
<feature type="binding site" evidence="1">
    <location>
        <begin position="436"/>
        <end position="438"/>
    </location>
    <ligand>
        <name>L-homocysteine</name>
        <dbReference type="ChEBI" id="CHEBI:58199"/>
    </ligand>
</feature>
<feature type="binding site" evidence="1">
    <location>
        <begin position="436"/>
        <end position="438"/>
    </location>
    <ligand>
        <name>L-methionine</name>
        <dbReference type="ChEBI" id="CHEBI:57844"/>
    </ligand>
</feature>
<feature type="binding site" evidence="1">
    <location>
        <position position="489"/>
    </location>
    <ligand>
        <name>L-homocysteine</name>
        <dbReference type="ChEBI" id="CHEBI:58199"/>
    </ligand>
</feature>
<feature type="binding site" evidence="1">
    <location>
        <position position="489"/>
    </location>
    <ligand>
        <name>L-methionine</name>
        <dbReference type="ChEBI" id="CHEBI:57844"/>
    </ligand>
</feature>
<feature type="binding site" evidence="1">
    <location>
        <begin position="520"/>
        <end position="521"/>
    </location>
    <ligand>
        <name>5-methyltetrahydropteroyltri-L-glutamate</name>
        <dbReference type="ChEBI" id="CHEBI:58207"/>
    </ligand>
</feature>
<feature type="binding site" evidence="1">
    <location>
        <position position="566"/>
    </location>
    <ligand>
        <name>5-methyltetrahydropteroyltri-L-glutamate</name>
        <dbReference type="ChEBI" id="CHEBI:58207"/>
    </ligand>
</feature>
<feature type="binding site" evidence="1">
    <location>
        <position position="604"/>
    </location>
    <ligand>
        <name>L-homocysteine</name>
        <dbReference type="ChEBI" id="CHEBI:58199"/>
    </ligand>
</feature>
<feature type="binding site" evidence="1">
    <location>
        <position position="604"/>
    </location>
    <ligand>
        <name>L-methionine</name>
        <dbReference type="ChEBI" id="CHEBI:57844"/>
    </ligand>
</feature>
<feature type="binding site" evidence="1">
    <location>
        <position position="610"/>
    </location>
    <ligand>
        <name>5-methyltetrahydropteroyltri-L-glutamate</name>
        <dbReference type="ChEBI" id="CHEBI:58207"/>
    </ligand>
</feature>
<feature type="binding site" evidence="1">
    <location>
        <position position="646"/>
    </location>
    <ligand>
        <name>Zn(2+)</name>
        <dbReference type="ChEBI" id="CHEBI:29105"/>
        <note>catalytic</note>
    </ligand>
</feature>
<feature type="binding site" evidence="1">
    <location>
        <position position="648"/>
    </location>
    <ligand>
        <name>Zn(2+)</name>
        <dbReference type="ChEBI" id="CHEBI:29105"/>
        <note>catalytic</note>
    </ligand>
</feature>
<feature type="binding site" evidence="1">
    <location>
        <position position="670"/>
    </location>
    <ligand>
        <name>Zn(2+)</name>
        <dbReference type="ChEBI" id="CHEBI:29105"/>
        <note>catalytic</note>
    </ligand>
</feature>
<feature type="binding site" evidence="1">
    <location>
        <position position="731"/>
    </location>
    <ligand>
        <name>Zn(2+)</name>
        <dbReference type="ChEBI" id="CHEBI:29105"/>
        <note>catalytic</note>
    </ligand>
</feature>
<protein>
    <recommendedName>
        <fullName evidence="1">5-methyltetrahydropteroyltriglutamate--homocysteine methyltransferase</fullName>
        <ecNumber evidence="1">2.1.1.14</ecNumber>
    </recommendedName>
    <alternativeName>
        <fullName evidence="1">Cobalamin-independent methionine synthase</fullName>
    </alternativeName>
    <alternativeName>
        <fullName evidence="1">Methionine synthase, vitamin-B12 independent isozyme</fullName>
    </alternativeName>
</protein>
<name>METE_XYLF2</name>
<comment type="function">
    <text evidence="1">Catalyzes the transfer of a methyl group from 5-methyltetrahydrofolate to homocysteine resulting in methionine formation.</text>
</comment>
<comment type="catalytic activity">
    <reaction evidence="1">
        <text>5-methyltetrahydropteroyltri-L-glutamate + L-homocysteine = tetrahydropteroyltri-L-glutamate + L-methionine</text>
        <dbReference type="Rhea" id="RHEA:21196"/>
        <dbReference type="ChEBI" id="CHEBI:57844"/>
        <dbReference type="ChEBI" id="CHEBI:58140"/>
        <dbReference type="ChEBI" id="CHEBI:58199"/>
        <dbReference type="ChEBI" id="CHEBI:58207"/>
        <dbReference type="EC" id="2.1.1.14"/>
    </reaction>
</comment>
<comment type="cofactor">
    <cofactor evidence="1">
        <name>Zn(2+)</name>
        <dbReference type="ChEBI" id="CHEBI:29105"/>
    </cofactor>
    <text evidence="1">Binds 1 zinc ion per subunit.</text>
</comment>
<comment type="pathway">
    <text evidence="1">Amino-acid biosynthesis; L-methionine biosynthesis via de novo pathway; L-methionine from L-homocysteine (MetE route): step 1/1.</text>
</comment>
<comment type="similarity">
    <text evidence="1">Belongs to the vitamin-B12 independent methionine synthase family.</text>
</comment>
<proteinExistence type="inferred from homology"/>
<evidence type="ECO:0000255" key="1">
    <source>
        <dbReference type="HAMAP-Rule" id="MF_00172"/>
    </source>
</evidence>
<dbReference type="EC" id="2.1.1.14" evidence="1"/>
<dbReference type="EMBL" id="CP001011">
    <property type="protein sequence ID" value="ACB92810.1"/>
    <property type="molecule type" value="Genomic_DNA"/>
</dbReference>
<dbReference type="RefSeq" id="WP_004088273.1">
    <property type="nucleotide sequence ID" value="NC_010577.1"/>
</dbReference>
<dbReference type="SMR" id="B2I621"/>
<dbReference type="GeneID" id="93905122"/>
<dbReference type="KEGG" id="xfn:XfasM23_1392"/>
<dbReference type="HOGENOM" id="CLU_013175_0_0_6"/>
<dbReference type="UniPathway" id="UPA00051">
    <property type="reaction ID" value="UER00082"/>
</dbReference>
<dbReference type="Proteomes" id="UP000001698">
    <property type="component" value="Chromosome"/>
</dbReference>
<dbReference type="GO" id="GO:0003871">
    <property type="term" value="F:5-methyltetrahydropteroyltriglutamate-homocysteine S-methyltransferase activity"/>
    <property type="evidence" value="ECO:0007669"/>
    <property type="project" value="UniProtKB-UniRule"/>
</dbReference>
<dbReference type="GO" id="GO:0008270">
    <property type="term" value="F:zinc ion binding"/>
    <property type="evidence" value="ECO:0007669"/>
    <property type="project" value="InterPro"/>
</dbReference>
<dbReference type="GO" id="GO:0009086">
    <property type="term" value="P:methionine biosynthetic process"/>
    <property type="evidence" value="ECO:0007669"/>
    <property type="project" value="UniProtKB-UniRule"/>
</dbReference>
<dbReference type="GO" id="GO:0032259">
    <property type="term" value="P:methylation"/>
    <property type="evidence" value="ECO:0007669"/>
    <property type="project" value="UniProtKB-KW"/>
</dbReference>
<dbReference type="CDD" id="cd03311">
    <property type="entry name" value="CIMS_C_terminal_like"/>
    <property type="match status" value="1"/>
</dbReference>
<dbReference type="CDD" id="cd03312">
    <property type="entry name" value="CIMS_N_terminal_like"/>
    <property type="match status" value="1"/>
</dbReference>
<dbReference type="FunFam" id="3.20.20.210:FF:000002">
    <property type="entry name" value="5-methyltetrahydropteroyltriglutamate--homocysteine methyltransferase"/>
    <property type="match status" value="1"/>
</dbReference>
<dbReference type="FunFam" id="3.20.20.210:FF:000003">
    <property type="entry name" value="5-methyltetrahydropteroyltriglutamate--homocysteine methyltransferase"/>
    <property type="match status" value="1"/>
</dbReference>
<dbReference type="Gene3D" id="3.20.20.210">
    <property type="match status" value="2"/>
</dbReference>
<dbReference type="HAMAP" id="MF_00172">
    <property type="entry name" value="Meth_synth"/>
    <property type="match status" value="1"/>
</dbReference>
<dbReference type="InterPro" id="IPR013215">
    <property type="entry name" value="Cbl-indep_Met_Synth_N"/>
</dbReference>
<dbReference type="InterPro" id="IPR006276">
    <property type="entry name" value="Cobalamin-indep_Met_synthase"/>
</dbReference>
<dbReference type="InterPro" id="IPR002629">
    <property type="entry name" value="Met_Synth_C/arc"/>
</dbReference>
<dbReference type="InterPro" id="IPR038071">
    <property type="entry name" value="UROD/MetE-like_sf"/>
</dbReference>
<dbReference type="NCBIfam" id="TIGR01371">
    <property type="entry name" value="met_syn_B12ind"/>
    <property type="match status" value="1"/>
</dbReference>
<dbReference type="NCBIfam" id="NF003556">
    <property type="entry name" value="PRK05222.1"/>
    <property type="match status" value="1"/>
</dbReference>
<dbReference type="PANTHER" id="PTHR30519">
    <property type="entry name" value="5-METHYLTETRAHYDROPTEROYLTRIGLUTAMATE--HOMOCYSTEINE METHYLTRANSFERASE"/>
    <property type="match status" value="1"/>
</dbReference>
<dbReference type="Pfam" id="PF08267">
    <property type="entry name" value="Meth_synt_1"/>
    <property type="match status" value="1"/>
</dbReference>
<dbReference type="Pfam" id="PF01717">
    <property type="entry name" value="Meth_synt_2"/>
    <property type="match status" value="1"/>
</dbReference>
<dbReference type="PIRSF" id="PIRSF000382">
    <property type="entry name" value="MeTrfase_B12_ind"/>
    <property type="match status" value="1"/>
</dbReference>
<dbReference type="SUPFAM" id="SSF51726">
    <property type="entry name" value="UROD/MetE-like"/>
    <property type="match status" value="2"/>
</dbReference>
<accession>B2I621</accession>
<keyword id="KW-0028">Amino-acid biosynthesis</keyword>
<keyword id="KW-0479">Metal-binding</keyword>
<keyword id="KW-0486">Methionine biosynthesis</keyword>
<keyword id="KW-0489">Methyltransferase</keyword>
<keyword id="KW-0677">Repeat</keyword>
<keyword id="KW-0808">Transferase</keyword>
<keyword id="KW-0862">Zinc</keyword>